<comment type="function">
    <text evidence="1">Component of the type VII secretion system (Ess). Provides together with EssB and other components such as EssC and EssE a secretion platform across the cytoplasmic membrane in the host.</text>
</comment>
<comment type="subunit">
    <text evidence="1 4">Homodimer (PubMed:26785823). Interacts with EssB (By similarity).</text>
</comment>
<comment type="subcellular location">
    <subcellularLocation>
        <location evidence="4">Cell membrane</location>
        <topology evidence="2">Multi-pass membrane protein</topology>
    </subcellularLocation>
</comment>
<comment type="similarity">
    <text evidence="6">Belongs to the EsaA family.</text>
</comment>
<feature type="chain" id="PRO_0000437374" description="Type VII secretion system accessory factor EsaA">
    <location>
        <begin position="1"/>
        <end position="1009"/>
    </location>
</feature>
<feature type="transmembrane region" description="Helical" evidence="2">
    <location>
        <begin position="7"/>
        <end position="27"/>
    </location>
</feature>
<feature type="transmembrane region" description="Helical" evidence="2">
    <location>
        <begin position="822"/>
        <end position="842"/>
    </location>
</feature>
<feature type="transmembrane region" description="Helical" evidence="2">
    <location>
        <begin position="869"/>
        <end position="889"/>
    </location>
</feature>
<feature type="transmembrane region" description="Helical" evidence="2">
    <location>
        <begin position="903"/>
        <end position="923"/>
    </location>
</feature>
<feature type="transmembrane region" description="Helical" evidence="2">
    <location>
        <begin position="928"/>
        <end position="948"/>
    </location>
</feature>
<feature type="transmembrane region" description="Helical" evidence="2">
    <location>
        <begin position="979"/>
        <end position="999"/>
    </location>
</feature>
<feature type="region of interest" description="Disordered" evidence="3">
    <location>
        <begin position="680"/>
        <end position="707"/>
    </location>
</feature>
<feature type="compositionally biased region" description="Basic and acidic residues" evidence="3">
    <location>
        <begin position="680"/>
        <end position="697"/>
    </location>
</feature>
<protein>
    <recommendedName>
        <fullName evidence="6">Type VII secretion system accessory factor EsaA</fullName>
    </recommendedName>
</protein>
<reference key="1">
    <citation type="book" date="2006" name="Gram positive pathogens, 2nd edition">
        <title>The Staphylococcus aureus NCTC 8325 genome.</title>
        <editorList>
            <person name="Fischetti V."/>
            <person name="Novick R."/>
            <person name="Ferretti J."/>
            <person name="Portnoy D."/>
            <person name="Rood J."/>
        </editorList>
        <authorList>
            <person name="Gillaspy A.F."/>
            <person name="Worrell V."/>
            <person name="Orvis J."/>
            <person name="Roe B.A."/>
            <person name="Dyer D.W."/>
            <person name="Iandolo J.J."/>
        </authorList>
    </citation>
    <scope>NUCLEOTIDE SEQUENCE [LARGE SCALE GENOMIC DNA]</scope>
    <source>
        <strain>NCTC 8325 / PS 47</strain>
    </source>
</reference>
<reference key="2">
    <citation type="journal article" date="2016" name="FEBS Lett.">
        <title>Membrane interactions and self-association of components of the Ess/Type VII secretion system of Staphylococcus aureus.</title>
        <authorList>
            <person name="Jaeger F."/>
            <person name="Zoltner M."/>
            <person name="Kneuper H."/>
            <person name="Hunter W.N."/>
            <person name="Palmer T."/>
        </authorList>
    </citation>
    <scope>SUBUNIT</scope>
    <scope>SUBCELLULAR LOCATION</scope>
    <source>
        <strain>RN6390</strain>
    </source>
</reference>
<dbReference type="EMBL" id="CP000253">
    <property type="protein sequence ID" value="ABD29432.1"/>
    <property type="molecule type" value="Genomic_DNA"/>
</dbReference>
<dbReference type="RefSeq" id="WP_000728949.1">
    <property type="nucleotide sequence ID" value="NZ_LS483365.1"/>
</dbReference>
<dbReference type="RefSeq" id="YP_498852.1">
    <property type="nucleotide sequence ID" value="NC_007795.1"/>
</dbReference>
<dbReference type="SMR" id="Q2G188"/>
<dbReference type="STRING" id="93061.SAOUHSC_00258"/>
<dbReference type="PaxDb" id="1280-SAXN108_0263"/>
<dbReference type="GeneID" id="3919200"/>
<dbReference type="KEGG" id="sao:SAOUHSC_00258"/>
<dbReference type="PATRIC" id="fig|93061.5.peg.237"/>
<dbReference type="eggNOG" id="COG0842">
    <property type="taxonomic scope" value="Bacteria"/>
</dbReference>
<dbReference type="eggNOG" id="COG1511">
    <property type="taxonomic scope" value="Bacteria"/>
</dbReference>
<dbReference type="HOGENOM" id="CLU_015018_0_0_9"/>
<dbReference type="OrthoDB" id="4974788at2"/>
<dbReference type="PRO" id="PR:Q2G188"/>
<dbReference type="Proteomes" id="UP000008816">
    <property type="component" value="Chromosome"/>
</dbReference>
<dbReference type="GO" id="GO:0005886">
    <property type="term" value="C:plasma membrane"/>
    <property type="evidence" value="ECO:0007669"/>
    <property type="project" value="UniProtKB-SubCell"/>
</dbReference>
<dbReference type="Gene3D" id="3.40.1710.10">
    <property type="entry name" value="abc type-2 transporter like domain"/>
    <property type="match status" value="1"/>
</dbReference>
<dbReference type="InterPro" id="IPR051328">
    <property type="entry name" value="T7SS_ABC-Transporter"/>
</dbReference>
<dbReference type="InterPro" id="IPR023838">
    <property type="entry name" value="T7SS_EsaA"/>
</dbReference>
<dbReference type="NCBIfam" id="TIGR03929">
    <property type="entry name" value="T7_esaA_Nterm"/>
    <property type="match status" value="1"/>
</dbReference>
<dbReference type="PANTHER" id="PTHR43077:SF10">
    <property type="entry name" value="TRANSPORT PERMEASE PROTEIN"/>
    <property type="match status" value="1"/>
</dbReference>
<dbReference type="PANTHER" id="PTHR43077">
    <property type="entry name" value="TRANSPORT PERMEASE YVFS-RELATED"/>
    <property type="match status" value="1"/>
</dbReference>
<organism>
    <name type="scientific">Staphylococcus aureus (strain NCTC 8325 / PS 47)</name>
    <dbReference type="NCBI Taxonomy" id="93061"/>
    <lineage>
        <taxon>Bacteria</taxon>
        <taxon>Bacillati</taxon>
        <taxon>Bacillota</taxon>
        <taxon>Bacilli</taxon>
        <taxon>Bacillales</taxon>
        <taxon>Staphylococcaceae</taxon>
        <taxon>Staphylococcus</taxon>
    </lineage>
</organism>
<evidence type="ECO:0000250" key="1">
    <source>
        <dbReference type="UniProtKB" id="A0A0H2XFP1"/>
    </source>
</evidence>
<evidence type="ECO:0000255" key="2"/>
<evidence type="ECO:0000256" key="3">
    <source>
        <dbReference type="SAM" id="MobiDB-lite"/>
    </source>
</evidence>
<evidence type="ECO:0000269" key="4">
    <source>
    </source>
</evidence>
<evidence type="ECO:0000303" key="5">
    <source>
    </source>
</evidence>
<evidence type="ECO:0000305" key="6"/>
<evidence type="ECO:0000312" key="7">
    <source>
        <dbReference type="EMBL" id="ABD29432.1"/>
    </source>
</evidence>
<keyword id="KW-1003">Cell membrane</keyword>
<keyword id="KW-0472">Membrane</keyword>
<keyword id="KW-1185">Reference proteome</keyword>
<keyword id="KW-0812">Transmembrane</keyword>
<keyword id="KW-1133">Transmembrane helix</keyword>
<keyword id="KW-0843">Virulence</keyword>
<proteinExistence type="evidence at protein level"/>
<name>ESAA_STAA8</name>
<accession>Q2G188</accession>
<sequence length="1009" mass="114826">MKKKNWIYALIVTLIIIIAIVSMIFFVQTKYGDQSEKGSQSVSNKNNKIHIAIVNEDQPTTYNGKKVELGQAFIKRLANEKNYKFETVTRNVAESGLKNGGYQVMIVIPENFSKLAMQLDAKTPSKISLQYKTAVGQKEEVAKNTEKVVSNVLNDFNKNLVEIYLTSIIDNLHNAQKNVGAIMTREHGVNSKFSNYLLNPINDFPELFTDTLVNSISANKDITKWFQTYNKSLLSANSDTFRVNTDYNVSTLIEKQNSLFDEHNTAMDKMLQDYKSQKDSVELDNYINALKQMDSQIDQQSSMQDTGKEEYKQTVKENLDKLREIIQSQESPFSKGMIEDYRKQLTESLQDELANNKDLQDALNSIKMNNAQFAENLEKQLHDDIVKEPDTDTTFIYNMSKQDFIAAGLNEDEANKYEAIVKEAKRYKNEYNLKKPLAEHINLTDYDNQVAQDTSSLINDGVKVQRTETIKSNDINQLTVATDPHFNFEGDIKINGKKYDIKDQSVQLDTSNKEYKVEVNGVAKLKKDAEKDFLKDKTMHLQLLFGQANRQDEPNDKKATSVVDVTLNHNLDGRLSKDALSQQLSALSRFDAHYKMYTDTKGREDKPFDNKRLIDMMVDQVINDMESFKDDKVAVLHQIDSMEENSDKLIDDILNNKKNTTKNKEDISKLIDQLENVKKTFAEEPQEPKIDKGKNDEFNTMSSNLDKEISRISEKSTQLLSDTQESKSIADSVSGQLNQVDNNVNKLHATGRALGVRANDLNRQMAKNDKDNELFAKEFKKVLQNSKDGDRQNQALKAFMSNPVQKKNLENVLANNGNTDVISPTLFVLLMYLLSMITAYIFYSYERAKGQMNFIKDDYSSKNHLWNNVITSGVIGTTGLVEGLIVGLIAMNKFHVLAGYRAKFILMVILTMMVFVLINTYLLRQVKSIGMFLMIAALGLYFVAMNNLKAAGQGVTNKISPLSYIDNMFFNYLNAEHPIGLVLVILTVLVIIGFVLNMFIKHFKKERLI</sequence>
<gene>
    <name evidence="5" type="primary">esaA</name>
    <name evidence="7" type="ordered locus">SAOUHSC_00258</name>
</gene>